<comment type="function">
    <text evidence="5 7 10 12 14 15 21">Plays an important role in cell division and centrosome function by participating in centriole duplication (PubMed:17681131, PubMed:20531387). Inhibits microtubule nucleation from the centrosome. Involved in the regulation of slow processive growth of centriolar microtubules. Acts as a microtubule plus-end tracking protein that stabilizes centriolar microtubules and inhibits microtubule polymerization and extension from the distal ends of centrioles (PubMed:15047868, PubMed:27219064, PubMed:27306797). Required for centriole elongation and for STIL-mediated centriole amplification (PubMed:22020124). Required for the recruitment of CEP295 to the proximal end of new-born centrioles at the centriolar microtubule wall during early S phase in a PLK4-dependent manner (PubMed:27185865). May be involved in the control of centriolar-microtubule growth by acting as a regulator of tubulin release (PubMed:27306797).</text>
</comment>
<comment type="subunit">
    <text evidence="2 3 11 12 13 15 16">Forms homodimers (PubMed:27219064). Associates with microtubules plus ends; binds to beta-tubulin subunits exposed on microtubule outer surface at its distal tip; also associates with microtubule lattice (PubMed:19131341, PubMed:27219064, PubMed:27306797). Associated with the gamma-tubulin complex. Interacts with the head domain of EPB41 (PubMed:11003675). Interacts with LYST (PubMed:11984006). Interacts with CEP152 (via C-terminus) (PubMed:20852615). Interacts with STIL (PubMed:22020124, PubMed:25385835). Forms a complex with STIL and SASS6 (PubMed:22020124).</text>
</comment>
<comment type="interaction">
    <interactant intactId="EBI-946194">
        <id>Q9HC77</id>
    </interactant>
    <interactant intactId="EBI-711154">
        <id>Q9P287</id>
        <label>BCCIP</label>
    </interactant>
    <organismsDiffer>false</organismsDiffer>
    <experiments>3</experiments>
</comment>
<comment type="interaction">
    <interactant intactId="EBI-946194">
        <id>Q9HC77</id>
    </interactant>
    <interactant intactId="EBI-946194">
        <id>Q9HC77</id>
        <label>CENPJ</label>
    </interactant>
    <organismsDiffer>false</organismsDiffer>
    <experiments>3</experiments>
</comment>
<comment type="interaction">
    <interactant intactId="EBI-946194">
        <id>Q9HC77</id>
    </interactant>
    <interactant intactId="EBI-1046993">
        <id>Q66GS9</id>
        <label>CEP135</label>
    </interactant>
    <organismsDiffer>false</organismsDiffer>
    <experiments>8</experiments>
</comment>
<comment type="interaction">
    <interactant intactId="EBI-946194">
        <id>Q9HC77</id>
    </interactant>
    <interactant intactId="EBI-945857">
        <id>Q96RK0</id>
        <label>CIC</label>
    </interactant>
    <organismsDiffer>false</organismsDiffer>
    <experiments>2</experiments>
</comment>
<comment type="interaction">
    <interactant intactId="EBI-946194">
        <id>Q9HC77</id>
    </interactant>
    <interactant intactId="EBI-946212">
        <id>Q5VTD9</id>
        <label>GFI1B</label>
    </interactant>
    <organismsDiffer>false</organismsDiffer>
    <experiments>2</experiments>
</comment>
<comment type="interaction">
    <interactant intactId="EBI-946194">
        <id>Q9HC77</id>
    </interactant>
    <interactant intactId="EBI-721354">
        <id>Q9NYY3</id>
        <label>PLK2</label>
    </interactant>
    <organismsDiffer>false</organismsDiffer>
    <experiments>3</experiments>
</comment>
<comment type="interaction">
    <interactant intactId="EBI-946194">
        <id>Q9HC77</id>
    </interactant>
    <interactant intactId="EBI-7488405">
        <id>Q15468</id>
        <label>STIL</label>
    </interactant>
    <organismsDiffer>false</organismsDiffer>
    <experiments>15</experiments>
</comment>
<comment type="interaction">
    <interactant intactId="EBI-946194">
        <id>Q9HC77</id>
    </interactant>
    <interactant intactId="EBI-1105254">
        <id>O95271</id>
        <label>TNKS</label>
    </interactant>
    <organismsDiffer>false</organismsDiffer>
    <experiments>4</experiments>
</comment>
<comment type="interaction">
    <interactant intactId="EBI-946194">
        <id>Q9HC77</id>
    </interactant>
    <interactant intactId="EBI-359832">
        <id>P61981</id>
        <label>YWHAG</label>
    </interactant>
    <organismsDiffer>false</organismsDiffer>
    <experiments>4</experiments>
</comment>
<comment type="subcellular location">
    <subcellularLocation>
        <location evidence="2 4 10">Cytoplasm</location>
        <location evidence="2 4 10">Cytoskeleton</location>
        <location evidence="2 4 10">Microtubule organizing center</location>
        <location evidence="2 4 10">Centrosome</location>
    </subcellularLocation>
    <subcellularLocation>
        <location evidence="7 10 12">Cytoplasm</location>
        <location evidence="7 10 12">Cytoskeleton</location>
        <location evidence="7 10 12">Microtubule organizing center</location>
        <location evidence="7 10 12">Centrosome</location>
        <location evidence="7 10 12">Centriole</location>
    </subcellularLocation>
    <text evidence="2 7">Localized within the center of microtubule asters (PubMed:11003675). During centriole biogenesis, it is concentrated within the proximal lumen of both parental centrioles and procentrioles (PubMed:17681131).</text>
</comment>
<comment type="alternative products">
    <event type="alternative splicing"/>
    <isoform>
        <id>Q9HC77-1</id>
        <name>1</name>
        <sequence type="displayed"/>
    </isoform>
    <isoform>
        <id>Q9HC77-2</id>
        <name>2</name>
        <sequence type="described" ref="VSP_056831 VSP_056832"/>
    </isoform>
</comment>
<comment type="PTM">
    <text evidence="10">Phosphorylation at Ser-589 and Ser-595 by PLK2 is required for procentriole formation and centriole elongation. Phosphorylation by PLK2 oscillates during the cell cycle: it increases at G1/S transition and decreases during the exit from mitosis. Phosphorylation at Ser-595 is also mediated by PLK4 but is not a critical step in PLK4 function in procentriole assembly.</text>
</comment>
<comment type="disease" evidence="6 12">
    <disease id="DI-02207">
        <name>Microcephaly 6, primary, autosomal recessive</name>
        <acronym>MCPH6</acronym>
        <description>A disease defined as a head circumference more than 3 standard deviations below the age-related mean. Brain weight is markedly reduced and the cerebral cortex is disproportionately small. Despite this marked reduction in size, the gyral pattern is relatively well preserved, with no major abnormality in cortical architecture. Affected individuals have moderate intellectual disability. Primary microcephaly is further defined by the absence of other syndromic features or significant neurological deficits due to degenerative brain disorder.</description>
        <dbReference type="MIM" id="608393"/>
    </disease>
    <text>The disease is caused by variants affecting the gene represented in this entry.</text>
</comment>
<comment type="disease" evidence="9">
    <disease id="DI-02948">
        <name>Seckel syndrome 4</name>
        <acronym>SCKL4</acronym>
        <description>A rare autosomal recessive disorder characterized by proportionate dwarfism of prenatal onset associated with low birth weight, growth retardation, severe microcephaly with a bird-headed like appearance, and intellectual disability.</description>
        <dbReference type="MIM" id="613676"/>
    </disease>
    <text>The disease is caused by variants affecting the gene represented in this entry.</text>
</comment>
<comment type="similarity">
    <text evidence="20">Belongs to the TCP10 family.</text>
</comment>
<comment type="sequence caution" evidence="20">
    <conflict type="erroneous initiation">
        <sequence resource="EMBL-CDS" id="AAH24209"/>
    </conflict>
    <text>Truncated N-terminus.</text>
</comment>
<keyword id="KW-0002">3D-structure</keyword>
<keyword id="KW-0025">Alternative splicing</keyword>
<keyword id="KW-0963">Cytoplasm</keyword>
<keyword id="KW-0206">Cytoskeleton</keyword>
<keyword id="KW-0225">Disease variant</keyword>
<keyword id="KW-0242">Dwarfism</keyword>
<keyword id="KW-0991">Intellectual disability</keyword>
<keyword id="KW-0493">Microtubule</keyword>
<keyword id="KW-0597">Phosphoprotein</keyword>
<keyword id="KW-0905">Primary microcephaly</keyword>
<keyword id="KW-1267">Proteomics identification</keyword>
<keyword id="KW-1185">Reference proteome</keyword>
<protein>
    <recommendedName>
        <fullName evidence="17">Centrosomal P4.1-associated protein</fullName>
    </recommendedName>
    <alternativeName>
        <fullName>Centromere protein J</fullName>
        <shortName>CENP-J</shortName>
    </alternativeName>
    <alternativeName>
        <fullName evidence="22">Centrosome assembly and centriole elongation protein</fullName>
    </alternativeName>
    <alternativeName>
        <fullName>LAG-3-associated protein</fullName>
    </alternativeName>
    <alternativeName>
        <fullName>LYST-interacting protein 1</fullName>
    </alternativeName>
</protein>
<evidence type="ECO:0000256" key="1">
    <source>
        <dbReference type="SAM" id="MobiDB-lite"/>
    </source>
</evidence>
<evidence type="ECO:0000269" key="2">
    <source>
    </source>
</evidence>
<evidence type="ECO:0000269" key="3">
    <source>
    </source>
</evidence>
<evidence type="ECO:0000269" key="4">
    <source>
    </source>
</evidence>
<evidence type="ECO:0000269" key="5">
    <source>
    </source>
</evidence>
<evidence type="ECO:0000269" key="6">
    <source>
    </source>
</evidence>
<evidence type="ECO:0000269" key="7">
    <source>
    </source>
</evidence>
<evidence type="ECO:0000269" key="8">
    <source>
    </source>
</evidence>
<evidence type="ECO:0000269" key="9">
    <source>
    </source>
</evidence>
<evidence type="ECO:0000269" key="10">
    <source>
    </source>
</evidence>
<evidence type="ECO:0000269" key="11">
    <source>
    </source>
</evidence>
<evidence type="ECO:0000269" key="12">
    <source>
    </source>
</evidence>
<evidence type="ECO:0000269" key="13">
    <source>
    </source>
</evidence>
<evidence type="ECO:0000269" key="14">
    <source>
    </source>
</evidence>
<evidence type="ECO:0000269" key="15">
    <source>
    </source>
</evidence>
<evidence type="ECO:0000269" key="16">
    <source>
    </source>
</evidence>
<evidence type="ECO:0000303" key="17">
    <source>
    </source>
</evidence>
<evidence type="ECO:0000303" key="18">
    <source>
    </source>
</evidence>
<evidence type="ECO:0000303" key="19">
    <source ref="6"/>
</evidence>
<evidence type="ECO:0000305" key="20"/>
<evidence type="ECO:0000305" key="21">
    <source>
    </source>
</evidence>
<evidence type="ECO:0000312" key="22">
    <source>
        <dbReference type="HGNC" id="HGNC:17272"/>
    </source>
</evidence>
<evidence type="ECO:0007744" key="23">
    <source>
        <dbReference type="PDB" id="5EIB"/>
    </source>
</evidence>
<evidence type="ECO:0007744" key="24">
    <source>
    </source>
</evidence>
<evidence type="ECO:0007744" key="25">
    <source>
    </source>
</evidence>
<evidence type="ECO:0007829" key="26">
    <source>
        <dbReference type="PDB" id="5EIB"/>
    </source>
</evidence>
<evidence type="ECO:0007829" key="27">
    <source>
        <dbReference type="PDB" id="7Q1F"/>
    </source>
</evidence>
<accession>Q9HC77</accession>
<accession>Q2KHM6</accession>
<accession>Q5JPD5</accession>
<accession>Q5T6R5</accession>
<accession>Q96KS5</accession>
<accession>Q9C067</accession>
<sequence length="1338" mass="153000">MFLMPTSSELNSGQNFLTQWMTNPSRAGVILNRGFPILEADKEKRAAVDISTSFPIKGTHFSDSFSFINEEDSLLEEQKLESNNPYKPQSDKSETHTAFPCIKKGPQVAACHSAPGHQEENKNDFIPDLASEFKEGAYKDPLFKKLEQLKEVQQKKQEQLKRQQLEQLQRLMEEQEKLLTMVSGQCTLPGLSLLPDDQSQKHRSPGNTTTGERATCCFPSYVYPDPTQEETYPSNILSHEQSNFCRTAHGDFVLTSKRASPNLFSEAQYQEAPVEKNNLKEENRNHPTGESILCWEKVTEQIQEANDKNLQKHDDSSEVANIEERPIKAAIGERKQTFEDYLEEQIQLEEQELKQKQLKEAEGPLPIKAKPKQPFLKRGEGLARFTNAKSKFQKGKESKLVTNQSTSEDQPLFKMDRQQLQRKTALKNKELCADNPILKKDSKARTKSGSVTLSQKPKMLKCSNRKSLSPSGLKIQTGKKCDGQFRDQIKFENKVTSNNKENVTECPKPCDTGCTGWNKTQGKDRLPLSTGPASRLAAKSPIRETMKESESSLDVSLQKKLETWEREKEKENLELDEFLFLEQAADEISFSSNSSFVLKILERDQQICKGHRMSSTPVKAVPQKTNPADPISHCNRSEDLDHTAREKESECEVAPKQLHSLSSADELREQPCKIRKAVQKSTSENQTEWNARDDEGVPNSDSSTDSEEQLDVTIKPSTEDRERGISSREDSPQVCDDKGPFKDTRTQEDKRRDVDLDLSDKDYSSDESIMESIKHKVSEPSRSSSLSLSKMDFDDERTWTDLEENLCNHDVVLGNESTYGTPQTCYPNNEIGILDKTIKRKIAPVKRGEDLSKSRRSRSPPTSELMMKFFPSLKPKPKSDSHLGNELKLNISQDQPPGDNARSQVLREKIIELETEIEKFKAENASLAKLRIERESALEKLRKEIADFEQQKAKELARIEEFKKEEMRKLQKERKVFEKYTTAARTFPDKKEREEIQTLKQQIADLREDLKRKETKWSSTHSRLRSQIQMLVRENTDLREEIKVMERFRLDAWKRAEAIESSLEVEKKDKLANTSVRFQNSQISSGTQVEKYKKNYLPMQGNPPRRSKSAPPRDLGNLDKGQAASPREPLEPLNFPDPEYKEEEEDQDIQGEISHPDGKVEKVYKNGCRVILFPNGTRKEVSADGKTITVTFFNGDVKQVMPDQRVIYYYAAAQTTHTTYPEGLEVLHFSSGQIEKHYPDGRKEITFPDQTVKNLFPDGQEESIFPDGTIVRVQRDGNKLIEFNNGQRELHTAQFKRREYPDGTVKTVYANGHQETKYRSGRIRVKDKEGNVLMDTEL</sequence>
<gene>
    <name evidence="17 22" type="primary">CPAP</name>
    <name type="synonym">CENPJ</name>
    <name evidence="19" type="synonym">LAP</name>
    <name type="synonym">LIP1</name>
</gene>
<proteinExistence type="evidence at protein level"/>
<reference key="1">
    <citation type="journal article" date="2000" name="Mol. Cell. Biol.">
        <title>Protein 4.1 R-135 interacts with a novel centrosomal protein (CPAP) which is associated with the gamma-tubulin complex.</title>
        <authorList>
            <person name="Hung L.-Y."/>
            <person name="Tang C.J."/>
            <person name="Tang T.K."/>
        </authorList>
    </citation>
    <scope>NUCLEOTIDE SEQUENCE [MRNA] (ISOFORM 1)</scope>
    <scope>SUBCELLULAR LOCATION</scope>
    <scope>INTERACTION WITH EPB41 AND GAMMA-TUBULIN</scope>
</reference>
<reference key="2">
    <citation type="journal article" date="2007" name="BMC Genomics">
        <title>The full-ORF clone resource of the German cDNA consortium.</title>
        <authorList>
            <person name="Bechtel S."/>
            <person name="Rosenfelder H."/>
            <person name="Duda A."/>
            <person name="Schmidt C.P."/>
            <person name="Ernst U."/>
            <person name="Wellenreuther R."/>
            <person name="Mehrle A."/>
            <person name="Schuster C."/>
            <person name="Bahr A."/>
            <person name="Bloecker H."/>
            <person name="Heubner D."/>
            <person name="Hoerlein A."/>
            <person name="Michel G."/>
            <person name="Wedler H."/>
            <person name="Koehrer K."/>
            <person name="Ottenwaelder B."/>
            <person name="Poustka A."/>
            <person name="Wiemann S."/>
            <person name="Schupp I."/>
        </authorList>
    </citation>
    <scope>NUCLEOTIDE SEQUENCE [LARGE SCALE MRNA] (ISOFORM 2)</scope>
    <source>
        <tissue>Lymph node</tissue>
    </source>
</reference>
<reference key="3">
    <citation type="journal article" date="2004" name="Nature">
        <title>The DNA sequence and analysis of human chromosome 13.</title>
        <authorList>
            <person name="Dunham A."/>
            <person name="Matthews L.H."/>
            <person name="Burton J."/>
            <person name="Ashurst J.L."/>
            <person name="Howe K.L."/>
            <person name="Ashcroft K.J."/>
            <person name="Beare D.M."/>
            <person name="Burford D.C."/>
            <person name="Hunt S.E."/>
            <person name="Griffiths-Jones S."/>
            <person name="Jones M.C."/>
            <person name="Keenan S.J."/>
            <person name="Oliver K."/>
            <person name="Scott C.E."/>
            <person name="Ainscough R."/>
            <person name="Almeida J.P."/>
            <person name="Ambrose K.D."/>
            <person name="Andrews D.T."/>
            <person name="Ashwell R.I.S."/>
            <person name="Babbage A.K."/>
            <person name="Bagguley C.L."/>
            <person name="Bailey J."/>
            <person name="Bannerjee R."/>
            <person name="Barlow K.F."/>
            <person name="Bates K."/>
            <person name="Beasley H."/>
            <person name="Bird C.P."/>
            <person name="Bray-Allen S."/>
            <person name="Brown A.J."/>
            <person name="Brown J.Y."/>
            <person name="Burrill W."/>
            <person name="Carder C."/>
            <person name="Carter N.P."/>
            <person name="Chapman J.C."/>
            <person name="Clamp M.E."/>
            <person name="Clark S.Y."/>
            <person name="Clarke G."/>
            <person name="Clee C.M."/>
            <person name="Clegg S.C."/>
            <person name="Cobley V."/>
            <person name="Collins J.E."/>
            <person name="Corby N."/>
            <person name="Coville G.J."/>
            <person name="Deloukas P."/>
            <person name="Dhami P."/>
            <person name="Dunham I."/>
            <person name="Dunn M."/>
            <person name="Earthrowl M.E."/>
            <person name="Ellington A.G."/>
            <person name="Faulkner L."/>
            <person name="Frankish A.G."/>
            <person name="Frankland J."/>
            <person name="French L."/>
            <person name="Garner P."/>
            <person name="Garnett J."/>
            <person name="Gilbert J.G.R."/>
            <person name="Gilson C.J."/>
            <person name="Ghori J."/>
            <person name="Grafham D.V."/>
            <person name="Gribble S.M."/>
            <person name="Griffiths C."/>
            <person name="Hall R.E."/>
            <person name="Hammond S."/>
            <person name="Harley J.L."/>
            <person name="Hart E.A."/>
            <person name="Heath P.D."/>
            <person name="Howden P.J."/>
            <person name="Huckle E.J."/>
            <person name="Hunt P.J."/>
            <person name="Hunt A.R."/>
            <person name="Johnson C."/>
            <person name="Johnson D."/>
            <person name="Kay M."/>
            <person name="Kimberley A.M."/>
            <person name="King A."/>
            <person name="Laird G.K."/>
            <person name="Langford C.J."/>
            <person name="Lawlor S."/>
            <person name="Leongamornlert D.A."/>
            <person name="Lloyd D.M."/>
            <person name="Lloyd C."/>
            <person name="Loveland J.E."/>
            <person name="Lovell J."/>
            <person name="Martin S."/>
            <person name="Mashreghi-Mohammadi M."/>
            <person name="McLaren S.J."/>
            <person name="McMurray A."/>
            <person name="Milne S."/>
            <person name="Moore M.J.F."/>
            <person name="Nickerson T."/>
            <person name="Palmer S.A."/>
            <person name="Pearce A.V."/>
            <person name="Peck A.I."/>
            <person name="Pelan S."/>
            <person name="Phillimore B."/>
            <person name="Porter K.M."/>
            <person name="Rice C.M."/>
            <person name="Searle S."/>
            <person name="Sehra H.K."/>
            <person name="Shownkeen R."/>
            <person name="Skuce C.D."/>
            <person name="Smith M."/>
            <person name="Steward C.A."/>
            <person name="Sycamore N."/>
            <person name="Tester J."/>
            <person name="Thomas D.W."/>
            <person name="Tracey A."/>
            <person name="Tromans A."/>
            <person name="Tubby B."/>
            <person name="Wall M."/>
            <person name="Wallis J.M."/>
            <person name="West A.P."/>
            <person name="Whitehead S.L."/>
            <person name="Willey D.L."/>
            <person name="Wilming L."/>
            <person name="Wray P.W."/>
            <person name="Wright M.W."/>
            <person name="Young L."/>
            <person name="Coulson A."/>
            <person name="Durbin R.M."/>
            <person name="Hubbard T."/>
            <person name="Sulston J.E."/>
            <person name="Beck S."/>
            <person name="Bentley D.R."/>
            <person name="Rogers J."/>
            <person name="Ross M.T."/>
        </authorList>
    </citation>
    <scope>NUCLEOTIDE SEQUENCE [LARGE SCALE GENOMIC DNA]</scope>
</reference>
<reference key="4">
    <citation type="submission" date="2005-07" db="EMBL/GenBank/DDBJ databases">
        <authorList>
            <person name="Mural R.J."/>
            <person name="Istrail S."/>
            <person name="Sutton G."/>
            <person name="Florea L."/>
            <person name="Halpern A.L."/>
            <person name="Mobarry C.M."/>
            <person name="Lippert R."/>
            <person name="Walenz B."/>
            <person name="Shatkay H."/>
            <person name="Dew I."/>
            <person name="Miller J.R."/>
            <person name="Flanigan M.J."/>
            <person name="Edwards N.J."/>
            <person name="Bolanos R."/>
            <person name="Fasulo D."/>
            <person name="Halldorsson B.V."/>
            <person name="Hannenhalli S."/>
            <person name="Turner R."/>
            <person name="Yooseph S."/>
            <person name="Lu F."/>
            <person name="Nusskern D.R."/>
            <person name="Shue B.C."/>
            <person name="Zheng X.H."/>
            <person name="Zhong F."/>
            <person name="Delcher A.L."/>
            <person name="Huson D.H."/>
            <person name="Kravitz S.A."/>
            <person name="Mouchard L."/>
            <person name="Reinert K."/>
            <person name="Remington K.A."/>
            <person name="Clark A.G."/>
            <person name="Waterman M.S."/>
            <person name="Eichler E.E."/>
            <person name="Adams M.D."/>
            <person name="Hunkapiller M.W."/>
            <person name="Myers E.W."/>
            <person name="Venter J.C."/>
        </authorList>
    </citation>
    <scope>NUCLEOTIDE SEQUENCE [LARGE SCALE GENOMIC DNA]</scope>
</reference>
<reference key="5">
    <citation type="journal article" date="2004" name="Genome Res.">
        <title>The status, quality, and expansion of the NIH full-length cDNA project: the Mammalian Gene Collection (MGC).</title>
        <authorList>
            <consortium name="The MGC Project Team"/>
        </authorList>
    </citation>
    <scope>NUCLEOTIDE SEQUENCE [LARGE SCALE MRNA] (ISOFORM 1)</scope>
    <source>
        <tissue>Muscle</tissue>
    </source>
</reference>
<reference key="6">
    <citation type="submission" date="2001-11" db="EMBL/GenBank/DDBJ databases">
        <title>LAP, a lymphocyte activation gene-3-associated protein that binds to a repeated EP motif in the intracellular region of LAG-3 may participate in the down-regulation of the CD3/TCR activation pathway.</title>
        <authorList>
            <person name="Andreae S."/>
            <person name="Triebel P.F."/>
        </authorList>
    </citation>
    <scope>NUCLEOTIDE SEQUENCE [MRNA] OF 967-1338 (ISOFORM 1)</scope>
</reference>
<reference key="7">
    <citation type="journal article" date="2002" name="Mol. Med.">
        <title>The Chediak-Higashi protein interacts with SNARE complex and signal transduction proteins.</title>
        <authorList>
            <person name="Tchernev V.T."/>
            <person name="Mansfield T.A."/>
            <person name="Giot L."/>
            <person name="Kumar A.M."/>
            <person name="Nandabalan K."/>
            <person name="Li Y."/>
            <person name="Mishra V.S."/>
            <person name="Detter J.C."/>
            <person name="Rothberg J.M."/>
            <person name="Wallace M.R."/>
            <person name="Southwick F.S."/>
            <person name="Kingsmore S.F."/>
        </authorList>
    </citation>
    <scope>NUCLEOTIDE SEQUENCE [MRNA] OF 1142-1338 (ISOFORM 1)</scope>
    <scope>INTERACTION WITH LYST</scope>
</reference>
<reference key="8">
    <citation type="journal article" date="2003" name="Nature">
        <title>Proteomic characterization of the human centrosome by protein correlation profiling.</title>
        <authorList>
            <person name="Andersen J.S."/>
            <person name="Wilkinson C.J."/>
            <person name="Mayor T."/>
            <person name="Mortensen P."/>
            <person name="Nigg E.A."/>
            <person name="Mann M."/>
        </authorList>
    </citation>
    <scope>IDENTIFICATION BY MASS SPECTROMETRY</scope>
    <scope>SUBCELLULAR LOCATION [LARGE SCALE ANALYSIS]</scope>
    <source>
        <tissue>Lymphoblast</tissue>
    </source>
</reference>
<reference key="9">
    <citation type="journal article" date="2004" name="Mol. Biol. Cell">
        <title>Identification of a novel microtubule-destabilizing motif in CPAP that binds to tubulin heterodimers and inhibits microtubule assembly.</title>
        <authorList>
            <person name="Hung L.-Y."/>
            <person name="Chen H.-L."/>
            <person name="Chang C.-W."/>
            <person name="Li B.-R."/>
            <person name="Tang T.K."/>
        </authorList>
    </citation>
    <scope>FUNCTION IN MICROTUBULE DESTABILIZATION</scope>
</reference>
<reference key="10">
    <citation type="journal article" date="2007" name="Dev. Cell">
        <title>Plk4-induced centriole biogenesis in human cells.</title>
        <authorList>
            <person name="Kleylein-Sohn J."/>
            <person name="Westendorf J."/>
            <person name="Le Clech M."/>
            <person name="Habedanck R."/>
            <person name="Stierhof Y.-D."/>
            <person name="Nigg E.A."/>
        </authorList>
    </citation>
    <scope>FUNCTION</scope>
    <scope>SUBCELLULAR LOCATION</scope>
</reference>
<reference key="11">
    <citation type="journal article" date="2009" name="J. Biol. Chem.">
        <title>The PN2-3 domain of centrosomal P4.1-associated protein implements a novel mechanism for tubulin sequestration.</title>
        <authorList>
            <person name="Cormier A."/>
            <person name="Clement M.J."/>
            <person name="Knossow M."/>
            <person name="Lachkar S."/>
            <person name="Savarin P."/>
            <person name="Toma F."/>
            <person name="Sobel A."/>
            <person name="Gigant B."/>
            <person name="Curmi P.A."/>
        </authorList>
    </citation>
    <scope>TUBULIN-BINDING</scope>
</reference>
<reference key="12">
    <citation type="journal article" date="2010" name="EMBO J.">
        <title>PLK2 phosphorylation is critical for CPAP function in procentriole formation during the centrosome cycle.</title>
        <authorList>
            <person name="Chang J."/>
            <person name="Cizmecioglu O."/>
            <person name="Hoffmann I."/>
            <person name="Rhee K."/>
        </authorList>
    </citation>
    <scope>FUNCTION</scope>
    <scope>SUBCELLULAR LOCATION</scope>
    <scope>PHOSPHORYLATION AT SER-589 AND SER-595</scope>
    <scope>MUTAGENESIS OF SER-589 AND SER-595</scope>
</reference>
<reference key="13">
    <citation type="journal article" date="2010" name="J. Med. Genet.">
        <title>Novel CENPJ mutation causes Seckel syndrome.</title>
        <authorList>
            <person name="Al-Dosari M.S."/>
            <person name="Shaheen R."/>
            <person name="Colak D."/>
            <person name="Alkuraya F.S."/>
        </authorList>
    </citation>
    <scope>INVOLVEMENT IN SCKL4</scope>
</reference>
<reference key="14">
    <citation type="journal article" date="2010" name="Nature">
        <title>Asterless is a scaffold for the onset of centriole assembly.</title>
        <authorList>
            <person name="Dzhindzhev N.S."/>
            <person name="Yu Q.D."/>
            <person name="Weiskopf K."/>
            <person name="Tzolovsky G."/>
            <person name="Cunha-Ferreira I."/>
            <person name="Riparbelli M."/>
            <person name="Rodrigues-Martins A."/>
            <person name="Bettencourt-Dias M."/>
            <person name="Callaini G."/>
            <person name="Glover D.M."/>
        </authorList>
    </citation>
    <scope>INTERACTION WITH CEP152</scope>
</reference>
<reference key="15">
    <citation type="journal article" date="2011" name="EMBO J.">
        <title>The human microcephaly protein STIL interacts with CPAP and is required for procentriole formation.</title>
        <authorList>
            <person name="Tang C.J."/>
            <person name="Lin S.Y."/>
            <person name="Hsu W.B."/>
            <person name="Lin Y.N."/>
            <person name="Wu C.T."/>
            <person name="Lin Y.C."/>
            <person name="Chang C.W."/>
            <person name="Wu K.S."/>
            <person name="Tang T.K."/>
        </authorList>
    </citation>
    <scope>FUNCTION</scope>
    <scope>SUBCELLULAR LOCATION</scope>
    <scope>INTERACTION WITH STIL</scope>
    <scope>FORMATION OF A COMPLEX WITH STIL AND SASS8</scope>
    <scope>CHARACTERIZATION OF VARIANT MCPH6 VAL-1235</scope>
</reference>
<reference key="16">
    <citation type="journal article" date="2011" name="Sci. Signal.">
        <title>System-wide temporal characterization of the proteome and phosphoproteome of human embryonic stem cell differentiation.</title>
        <authorList>
            <person name="Rigbolt K.T."/>
            <person name="Prokhorova T.A."/>
            <person name="Akimov V."/>
            <person name="Henningsen J."/>
            <person name="Johansen P.T."/>
            <person name="Kratchmarova I."/>
            <person name="Kassem M."/>
            <person name="Mann M."/>
            <person name="Olsen J.V."/>
            <person name="Blagoev B."/>
        </authorList>
    </citation>
    <scope>PHOSPHORYLATION [LARGE SCALE ANALYSIS] AT SER-759</scope>
    <scope>IDENTIFICATION BY MASS SPECTROMETRY [LARGE SCALE ANALYSIS]</scope>
</reference>
<reference key="17">
    <citation type="journal article" date="2013" name="J. Proteome Res.">
        <title>Toward a comprehensive characterization of a human cancer cell phosphoproteome.</title>
        <authorList>
            <person name="Zhou H."/>
            <person name="Di Palma S."/>
            <person name="Preisinger C."/>
            <person name="Peng M."/>
            <person name="Polat A.N."/>
            <person name="Heck A.J."/>
            <person name="Mohammed S."/>
        </authorList>
    </citation>
    <scope>PHOSPHORYLATION [LARGE SCALE ANALYSIS] AT SER-260; SER-316 AND SER-540</scope>
    <scope>IDENTIFICATION BY MASS SPECTROMETRY [LARGE SCALE ANALYSIS]</scope>
    <source>
        <tissue>Cervix carcinoma</tissue>
        <tissue>Erythroleukemia</tissue>
    </source>
</reference>
<reference key="18">
    <citation type="journal article" date="2015" name="EMBO J.">
        <title>RBM14 prevents assembly of centriolar protein complexes and maintains mitotic spindle integrity.</title>
        <authorList>
            <person name="Shiratsuchi G."/>
            <person name="Takaoka K."/>
            <person name="Ashikawa T."/>
            <person name="Hamada H."/>
            <person name="Kitagawa D."/>
        </authorList>
    </citation>
    <scope>INTERACTION WITH STIL</scope>
</reference>
<reference key="19">
    <citation type="journal article" date="2016" name="J. Cell Sci.">
        <title>CEP295 interacts with microtubules and is required for centriole elongation.</title>
        <authorList>
            <person name="Chang C.W."/>
            <person name="Hsu W.B."/>
            <person name="Tsai J.J."/>
            <person name="Tang C.J."/>
            <person name="Tang T.K."/>
        </authorList>
    </citation>
    <scope>FUNCTION</scope>
</reference>
<reference key="20">
    <citation type="journal article" date="2016" name="Dev. Cell">
        <title>Centriolar CPAP/SAS-4 imparts slow processive microtubule growth.</title>
        <authorList>
            <person name="Sharma A."/>
            <person name="Aher A."/>
            <person name="Dynes N.J."/>
            <person name="Frey D."/>
            <person name="Katrukha E.A."/>
            <person name="Jaussi R."/>
            <person name="Grigoriev I."/>
            <person name="Croisier M."/>
            <person name="Kammerer R.A."/>
            <person name="Akhmanova A."/>
            <person name="Gonczy P."/>
            <person name="Steinmetz M.O."/>
        </authorList>
    </citation>
    <scope>X-RAY CRYSTALLOGRAPHY (2.20 ANGSTROMS) OF 311-422 IN COMPLEX WITH TUBULIN HETERODIMER AND DARPIN D1</scope>
    <scope>SELF-ASSOCIATION</scope>
    <scope>FUNCTION</scope>
    <scope>MUTAGENESIS OF PHE-338; GLU-339; TYR-341; PHE-375; LYS-377; ARG-378 AND PHE-385</scope>
</reference>
<reference evidence="23" key="21">
    <citation type="journal article" date="2016" name="Nat. Commun.">
        <title>Molecular basis for CPAP-tubulin interaction in controlling centriolar and ciliary length.</title>
        <authorList>
            <person name="Zheng X."/>
            <person name="Ramani A."/>
            <person name="Soni K."/>
            <person name="Gottardo M."/>
            <person name="Zheng S."/>
            <person name="Ming Gooi L."/>
            <person name="Li W."/>
            <person name="Feng S."/>
            <person name="Mariappan A."/>
            <person name="Wason A."/>
            <person name="Widlund P."/>
            <person name="Pozniakovsky A."/>
            <person name="Poser I."/>
            <person name="Deng H."/>
            <person name="Ou G."/>
            <person name="Riparbelli M."/>
            <person name="Giuliano C."/>
            <person name="Hyman A.A."/>
            <person name="Sattler M."/>
            <person name="Gopalakrishnan J."/>
            <person name="Li H."/>
        </authorList>
    </citation>
    <scope>X-RAY CRYSTALLOGRAPHY (2.10 ANGSTROMS) OF 372-394</scope>
    <scope>FUNCTION</scope>
    <scope>MUTAGENESIS OF GLU-343; GLU-344 AND PHE-375</scope>
</reference>
<reference key="22">
    <citation type="journal article" date="2005" name="Nat. Genet.">
        <title>A centrosomal mechanism involving CDK5RAP2 and CENPJ controls brain size.</title>
        <authorList>
            <person name="Bond J."/>
            <person name="Roberts E."/>
            <person name="Springell K."/>
            <person name="Lizarraga S.B."/>
            <person name="Scott S."/>
            <person name="Higgins J."/>
            <person name="Hampshire D.J."/>
            <person name="Morrison E.E."/>
            <person name="Leal G.F."/>
            <person name="Silva E.O."/>
            <person name="Costa S.M.R."/>
            <person name="Baralle D."/>
            <person name="Raponi M."/>
            <person name="Karbani G."/>
            <person name="Rashid Y."/>
            <person name="Jafri H."/>
            <person name="Bennett C."/>
            <person name="Corry P."/>
            <person name="Walsh C.A."/>
            <person name="Woods C.G."/>
        </authorList>
    </citation>
    <scope>VARIANT MCPH6 VAL-1235</scope>
</reference>
<reference key="23">
    <citation type="journal article" date="2005" name="Nat. Genet.">
        <authorList>
            <person name="Bond J."/>
            <person name="Roberts E."/>
            <person name="Springell K."/>
            <person name="Lizarraga S.B."/>
            <person name="Scott S."/>
            <person name="Higgins J."/>
            <person name="Hampshire D.J."/>
            <person name="Morrison E.E."/>
            <person name="Leal G.F."/>
            <person name="Silva E.O."/>
            <person name="Costa S.M.R."/>
            <person name="Baralle D."/>
            <person name="Raponi M."/>
            <person name="Karbani G."/>
            <person name="Rashid Y."/>
            <person name="Jafri H."/>
            <person name="Bennett C."/>
            <person name="Corry P."/>
            <person name="Walsh C.A."/>
            <person name="Woods C.G."/>
        </authorList>
    </citation>
    <scope>ERRATUM OF PUBMED:15793586</scope>
</reference>
<organism>
    <name type="scientific">Homo sapiens</name>
    <name type="common">Human</name>
    <dbReference type="NCBI Taxonomy" id="9606"/>
    <lineage>
        <taxon>Eukaryota</taxon>
        <taxon>Metazoa</taxon>
        <taxon>Chordata</taxon>
        <taxon>Craniata</taxon>
        <taxon>Vertebrata</taxon>
        <taxon>Euteleostomi</taxon>
        <taxon>Mammalia</taxon>
        <taxon>Eutheria</taxon>
        <taxon>Euarchontoglires</taxon>
        <taxon>Primates</taxon>
        <taxon>Haplorrhini</taxon>
        <taxon>Catarrhini</taxon>
        <taxon>Hominidae</taxon>
        <taxon>Homo</taxon>
    </lineage>
</organism>
<feature type="chain" id="PRO_0000089480" description="Centrosomal P4.1-associated protein">
    <location>
        <begin position="1"/>
        <end position="1338"/>
    </location>
</feature>
<feature type="region of interest" description="Disordered" evidence="1">
    <location>
        <begin position="190"/>
        <end position="211"/>
    </location>
</feature>
<feature type="region of interest" description="Alpha/beta-tubulin binding" evidence="8">
    <location>
        <begin position="319"/>
        <end position="394"/>
    </location>
</feature>
<feature type="region of interest" description="Disordered" evidence="1">
    <location>
        <begin position="386"/>
        <end position="414"/>
    </location>
</feature>
<feature type="region of interest" description="Disordered" evidence="1">
    <location>
        <begin position="436"/>
        <end position="479"/>
    </location>
</feature>
<feature type="region of interest" description="Disordered" evidence="1">
    <location>
        <begin position="521"/>
        <end position="551"/>
    </location>
</feature>
<feature type="region of interest" description="Disordered" evidence="1">
    <location>
        <begin position="611"/>
        <end position="789"/>
    </location>
</feature>
<feature type="region of interest" description="Disordered" evidence="1">
    <location>
        <begin position="845"/>
        <end position="865"/>
    </location>
</feature>
<feature type="region of interest" description="Interaction with STIL" evidence="12 13">
    <location>
        <begin position="895"/>
        <end position="1338"/>
    </location>
</feature>
<feature type="region of interest" description="Disordered" evidence="1">
    <location>
        <begin position="1096"/>
        <end position="1153"/>
    </location>
</feature>
<feature type="compositionally biased region" description="Polar residues" evidence="1">
    <location>
        <begin position="400"/>
        <end position="409"/>
    </location>
</feature>
<feature type="compositionally biased region" description="Basic and acidic residues" evidence="1">
    <location>
        <begin position="541"/>
        <end position="550"/>
    </location>
</feature>
<feature type="compositionally biased region" description="Basic and acidic residues" evidence="1">
    <location>
        <begin position="635"/>
        <end position="650"/>
    </location>
</feature>
<feature type="compositionally biased region" description="Polar residues" evidence="1">
    <location>
        <begin position="679"/>
        <end position="689"/>
    </location>
</feature>
<feature type="compositionally biased region" description="Basic and acidic residues" evidence="1">
    <location>
        <begin position="717"/>
        <end position="764"/>
    </location>
</feature>
<feature type="compositionally biased region" description="Acidic residues" evidence="1">
    <location>
        <begin position="1140"/>
        <end position="1149"/>
    </location>
</feature>
<feature type="modified residue" description="Phosphoserine" evidence="25">
    <location>
        <position position="260"/>
    </location>
</feature>
<feature type="modified residue" description="Phosphoserine" evidence="25">
    <location>
        <position position="316"/>
    </location>
</feature>
<feature type="modified residue" description="Phosphoserine" evidence="25">
    <location>
        <position position="540"/>
    </location>
</feature>
<feature type="modified residue" description="Phosphoserine; by PLK2" evidence="10">
    <location>
        <position position="589"/>
    </location>
</feature>
<feature type="modified residue" description="Phosphoserine; by PLK2 and PLK4" evidence="10">
    <location>
        <position position="595"/>
    </location>
</feature>
<feature type="modified residue" description="Phosphoserine" evidence="24">
    <location>
        <position position="759"/>
    </location>
</feature>
<feature type="splice variant" id="VSP_056831" description="In isoform 2." evidence="18">
    <original>NTSVRFQNSQISSG</original>
    <variation>AIHLEDPSLHLLVI</variation>
    <location>
        <begin position="1073"/>
        <end position="1086"/>
    </location>
</feature>
<feature type="splice variant" id="VSP_056832" description="In isoform 2." evidence="18">
    <location>
        <begin position="1087"/>
        <end position="1338"/>
    </location>
</feature>
<feature type="sequence variant" id="VAR_032427" description="In dbSNP:rs35498994.">
    <original>M</original>
    <variation>V</variation>
    <location>
        <position position="21"/>
    </location>
</feature>
<feature type="sequence variant" id="VAR_032428" description="In dbSNP:rs17081389.">
    <original>P</original>
    <variation>A</variation>
    <location>
        <position position="55"/>
    </location>
</feature>
<feature type="sequence variant" id="VAR_032429" description="In dbSNP:rs7336216.">
    <original>D</original>
    <variation>H</variation>
    <location>
        <position position="63"/>
    </location>
</feature>
<feature type="sequence variant" id="VAR_032430" description="In dbSNP:rs9511510.">
    <original>P</original>
    <variation>T</variation>
    <location>
        <position position="85"/>
    </location>
</feature>
<feature type="sequence variant" id="VAR_032431" description="In dbSNP:rs34177811.">
    <original>E</original>
    <variation>G</variation>
    <location>
        <position position="151"/>
    </location>
</feature>
<feature type="sequence variant" id="VAR_032432" description="In dbSNP:rs17402892.">
    <original>S</original>
    <variation>A</variation>
    <location>
        <position position="879"/>
    </location>
</feature>
<feature type="sequence variant" id="VAR_032433" description="In MCPH6; reduced interaction with STIL; dbSNP:rs121434311." evidence="6 12">
    <original>E</original>
    <variation>V</variation>
    <location>
        <position position="1235"/>
    </location>
</feature>
<feature type="mutagenesis site" description="Decreases interaction with alpha/beta-tubulin; when associated with A-339 and A-341." evidence="15">
    <original>F</original>
    <variation>A</variation>
    <location>
        <position position="338"/>
    </location>
</feature>
<feature type="mutagenesis site" description="Decreases interaction with alpha/beta-tubulin; when associated with A-338 and A-341." evidence="15">
    <original>E</original>
    <variation>A</variation>
    <location>
        <position position="339"/>
    </location>
</feature>
<feature type="mutagenesis site" description="Decreases interaction with alpha/beta-tubulin; when associated with A-338 and A-339." evidence="15">
    <original>Y</original>
    <variation>A</variation>
    <location>
        <position position="341"/>
    </location>
</feature>
<feature type="mutagenesis site" description="Slightly decreases interaction with alpha/beta-tubulin; causes overly long daughter centrioles and enhances ciliary length; when associated with A-344." evidence="16">
    <original>E</original>
    <variation>A</variation>
    <location>
        <position position="343"/>
    </location>
</feature>
<feature type="mutagenesis site" description="Slightly decreases interaction with alpha/beta-tubulin; causes overly long daughter centrioles and enhances ciliary length; when associated with A-343." evidence="16">
    <original>E</original>
    <variation>A</variation>
    <location>
        <position position="344"/>
    </location>
</feature>
<feature type="mutagenesis site" description="Decreases interaction with alpha/beta-tubulin; disrupts association with microtubule distal tip; no effect on association with microtubule lattice; when associated with A-385." evidence="15">
    <original>F</original>
    <variation>A</variation>
    <location>
        <position position="375"/>
    </location>
</feature>
<feature type="mutagenesis site" description="Strongly decreases interaction with alpha/beta-tubulin; causes shorter centrioles and doublet microtubules in cilia." evidence="16">
    <original>F</original>
    <variation>A</variation>
    <location>
        <position position="375"/>
    </location>
</feature>
<feature type="mutagenesis site" description="Decreases interaction with alpha/beta-tubulin; disrupts association with microtubule distal tip; no effect on association with microtubule lattice; when associated with E-378." evidence="15">
    <original>K</original>
    <variation>E</variation>
    <location>
        <position position="377"/>
    </location>
</feature>
<feature type="mutagenesis site" description="Decreases interaction with alpha/beta-tubulin; disrupts association with microtubule distal tip; no effect on association with microtubule lattice; when associated with E-377." evidence="15">
    <original>R</original>
    <variation>E</variation>
    <location>
        <position position="378"/>
    </location>
</feature>
<feature type="mutagenesis site" description="Decreases interaction with alpha/beta-tubulin; disrupts association with microtubule distal tip; no effect on association with microtubule lattice; when associated with A-375." evidence="15">
    <original>F</original>
    <variation>A</variation>
    <location>
        <position position="385"/>
    </location>
</feature>
<feature type="mutagenesis site" description="Abolishes phosphorylation by PLK2 and procentriole formation; when associated with A-595." evidence="10">
    <original>S</original>
    <variation>A</variation>
    <location>
        <position position="589"/>
    </location>
</feature>
<feature type="mutagenesis site" description="Abolishes phosphorylation by PLK2 and procentriole formation; when associated with A-589." evidence="10">
    <original>S</original>
    <variation>A</variation>
    <location>
        <position position="595"/>
    </location>
</feature>
<feature type="sequence conflict" description="In Ref. 1; AAG21074." evidence="20" ref="1">
    <original>L</original>
    <variation>R</variation>
    <location>
        <position position="129"/>
    </location>
</feature>
<feature type="sequence conflict" description="In Ref. 7; AAG49440." evidence="20" ref="7">
    <original>E</original>
    <variation>R</variation>
    <location>
        <position position="1142"/>
    </location>
</feature>
<feature type="sequence conflict" description="In Ref. 7; AAG49440." evidence="20" ref="7">
    <original>L</original>
    <variation>W</variation>
    <location>
        <position position="1224"/>
    </location>
</feature>
<feature type="sequence conflict" description="In Ref. 1; AAG21074." evidence="20" ref="1">
    <original>L</original>
    <variation>S</variation>
    <location>
        <position position="1333"/>
    </location>
</feature>
<feature type="helix" evidence="27">
    <location>
        <begin position="322"/>
        <end position="324"/>
    </location>
</feature>
<feature type="strand" evidence="27">
    <location>
        <begin position="333"/>
        <end position="335"/>
    </location>
</feature>
<feature type="helix" evidence="27">
    <location>
        <begin position="339"/>
        <end position="350"/>
    </location>
</feature>
<feature type="helix" evidence="26">
    <location>
        <begin position="380"/>
        <end position="385"/>
    </location>
</feature>
<dbReference type="EMBL" id="AF139625">
    <property type="protein sequence ID" value="AAG21074.1"/>
    <property type="molecule type" value="mRNA"/>
</dbReference>
<dbReference type="EMBL" id="AL833182">
    <property type="protein sequence ID" value="CAI46195.1"/>
    <property type="molecule type" value="mRNA"/>
</dbReference>
<dbReference type="EMBL" id="AL354798">
    <property type="status" value="NOT_ANNOTATED_CDS"/>
    <property type="molecule type" value="Genomic_DNA"/>
</dbReference>
<dbReference type="EMBL" id="CH471075">
    <property type="protein sequence ID" value="EAX08354.1"/>
    <property type="molecule type" value="Genomic_DNA"/>
</dbReference>
<dbReference type="EMBL" id="BC024209">
    <property type="protein sequence ID" value="AAH24209.3"/>
    <property type="status" value="ALT_INIT"/>
    <property type="molecule type" value="mRNA"/>
</dbReference>
<dbReference type="EMBL" id="BC113110">
    <property type="protein sequence ID" value="AAI13111.1"/>
    <property type="molecule type" value="mRNA"/>
</dbReference>
<dbReference type="EMBL" id="BC113662">
    <property type="protein sequence ID" value="AAI13663.1"/>
    <property type="molecule type" value="mRNA"/>
</dbReference>
<dbReference type="EMBL" id="BC113664">
    <property type="protein sequence ID" value="AAI13665.1"/>
    <property type="molecule type" value="mRNA"/>
</dbReference>
<dbReference type="EMBL" id="AJ303006">
    <property type="protein sequence ID" value="CAC80028.1"/>
    <property type="molecule type" value="mRNA"/>
</dbReference>
<dbReference type="EMBL" id="AF141337">
    <property type="protein sequence ID" value="AAG49440.1"/>
    <property type="molecule type" value="mRNA"/>
</dbReference>
<dbReference type="CCDS" id="CCDS9310.1">
    <molecule id="Q9HC77-1"/>
</dbReference>
<dbReference type="RefSeq" id="NP_060921.3">
    <molecule id="Q9HC77-1"/>
    <property type="nucleotide sequence ID" value="NM_018451.4"/>
</dbReference>
<dbReference type="PDB" id="5EIB">
    <property type="method" value="X-ray"/>
    <property type="resolution" value="2.10 A"/>
    <property type="chains" value="F=372-394"/>
</dbReference>
<dbReference type="PDB" id="5ITZ">
    <property type="method" value="X-ray"/>
    <property type="resolution" value="2.20 A"/>
    <property type="chains" value="D=311-422"/>
</dbReference>
<dbReference type="PDB" id="7Q1E">
    <property type="method" value="X-ray"/>
    <property type="resolution" value="2.70 A"/>
    <property type="chains" value="P=319-397"/>
</dbReference>
<dbReference type="PDB" id="7Q1F">
    <property type="method" value="X-ray"/>
    <property type="resolution" value="2.35 A"/>
    <property type="chains" value="P/V=319-397"/>
</dbReference>
<dbReference type="PDB" id="7Z0F">
    <property type="method" value="X-ray"/>
    <property type="resolution" value="2.40 A"/>
    <property type="chains" value="P=319-397"/>
</dbReference>
<dbReference type="PDB" id="7Z0G">
    <property type="method" value="X-ray"/>
    <property type="resolution" value="3.49 A"/>
    <property type="chains" value="P/U=319-397"/>
</dbReference>
<dbReference type="PDBsum" id="5EIB"/>
<dbReference type="PDBsum" id="5ITZ"/>
<dbReference type="PDBsum" id="7Q1E"/>
<dbReference type="PDBsum" id="7Q1F"/>
<dbReference type="PDBsum" id="7Z0F"/>
<dbReference type="PDBsum" id="7Z0G"/>
<dbReference type="BMRB" id="Q9HC77"/>
<dbReference type="SASBDB" id="Q9HC77"/>
<dbReference type="SMR" id="Q9HC77"/>
<dbReference type="BioGRID" id="120939">
    <property type="interactions" value="183"/>
</dbReference>
<dbReference type="ComplexPortal" id="CPX-1159">
    <property type="entry name" value="CPAP-STIL complex"/>
</dbReference>
<dbReference type="DIP" id="DIP-49904N"/>
<dbReference type="FunCoup" id="Q9HC77">
    <property type="interactions" value="1447"/>
</dbReference>
<dbReference type="IntAct" id="Q9HC77">
    <property type="interactions" value="148"/>
</dbReference>
<dbReference type="MINT" id="Q9HC77"/>
<dbReference type="STRING" id="9606.ENSP00000371308"/>
<dbReference type="GlyGen" id="Q9HC77">
    <property type="glycosylation" value="1 site, 1 O-linked glycan (1 site)"/>
</dbReference>
<dbReference type="iPTMnet" id="Q9HC77"/>
<dbReference type="PhosphoSitePlus" id="Q9HC77"/>
<dbReference type="BioMuta" id="CENPJ"/>
<dbReference type="DMDM" id="62899891"/>
<dbReference type="jPOST" id="Q9HC77"/>
<dbReference type="MassIVE" id="Q9HC77"/>
<dbReference type="PaxDb" id="9606-ENSP00000371308"/>
<dbReference type="PeptideAtlas" id="Q9HC77"/>
<dbReference type="ProteomicsDB" id="63008"/>
<dbReference type="ProteomicsDB" id="81646">
    <molecule id="Q9HC77-1"/>
</dbReference>
<dbReference type="Pumba" id="Q9HC77"/>
<dbReference type="Antibodypedia" id="22520">
    <property type="antibodies" value="202 antibodies from 26 providers"/>
</dbReference>
<dbReference type="DNASU" id="55835"/>
<dbReference type="Ensembl" id="ENST00000381884.9">
    <molecule id="Q9HC77-1"/>
    <property type="protein sequence ID" value="ENSP00000371308.4"/>
    <property type="gene ID" value="ENSG00000151849.16"/>
</dbReference>
<dbReference type="Ensembl" id="ENST00000616936.4">
    <molecule id="Q9HC77-2"/>
    <property type="protein sequence ID" value="ENSP00000477511.1"/>
    <property type="gene ID" value="ENSG00000151849.16"/>
</dbReference>
<dbReference type="GeneID" id="55835"/>
<dbReference type="KEGG" id="hsa:55835"/>
<dbReference type="MANE-Select" id="ENST00000381884.9">
    <property type="protein sequence ID" value="ENSP00000371308.4"/>
    <property type="RefSeq nucleotide sequence ID" value="NM_018451.5"/>
    <property type="RefSeq protein sequence ID" value="NP_060921.3"/>
</dbReference>
<dbReference type="UCSC" id="uc001upt.6">
    <molecule id="Q9HC77-1"/>
    <property type="organism name" value="human"/>
</dbReference>
<dbReference type="AGR" id="HGNC:17272"/>
<dbReference type="CTD" id="55835"/>
<dbReference type="DisGeNET" id="55835"/>
<dbReference type="GeneCards" id="CPAP"/>
<dbReference type="HGNC" id="HGNC:17272">
    <property type="gene designation" value="CPAP"/>
</dbReference>
<dbReference type="HPA" id="ENSG00000151849">
    <property type="expression patterns" value="Tissue enhanced (testis)"/>
</dbReference>
<dbReference type="MalaCards" id="CPAP"/>
<dbReference type="MIM" id="608393">
    <property type="type" value="phenotype"/>
</dbReference>
<dbReference type="MIM" id="609279">
    <property type="type" value="gene"/>
</dbReference>
<dbReference type="MIM" id="613676">
    <property type="type" value="phenotype"/>
</dbReference>
<dbReference type="neXtProt" id="NX_Q9HC77"/>
<dbReference type="OpenTargets" id="ENSG00000151849"/>
<dbReference type="Orphanet" id="2512">
    <property type="disease" value="Autosomal recessive primary microcephaly"/>
</dbReference>
<dbReference type="Orphanet" id="808">
    <property type="disease" value="Seckel syndrome"/>
</dbReference>
<dbReference type="PharmGKB" id="PA26403"/>
<dbReference type="VEuPathDB" id="HostDB:ENSG00000151849"/>
<dbReference type="eggNOG" id="ENOG502QQR0">
    <property type="taxonomic scope" value="Eukaryota"/>
</dbReference>
<dbReference type="GeneTree" id="ENSGT00530000063927"/>
<dbReference type="HOGENOM" id="CLU_008072_0_0_1"/>
<dbReference type="InParanoid" id="Q9HC77"/>
<dbReference type="OMA" id="EENSCKH"/>
<dbReference type="OrthoDB" id="10252174at2759"/>
<dbReference type="PAN-GO" id="Q9HC77">
    <property type="GO annotations" value="6 GO annotations based on evolutionary models"/>
</dbReference>
<dbReference type="PhylomeDB" id="Q9HC77"/>
<dbReference type="TreeFam" id="TF343156"/>
<dbReference type="PathwayCommons" id="Q9HC77"/>
<dbReference type="Reactome" id="R-HSA-2565942">
    <property type="pathway name" value="Regulation of PLK1 Activity at G2/M Transition"/>
</dbReference>
<dbReference type="Reactome" id="R-HSA-380259">
    <property type="pathway name" value="Loss of Nlp from mitotic centrosomes"/>
</dbReference>
<dbReference type="Reactome" id="R-HSA-380270">
    <property type="pathway name" value="Recruitment of mitotic centrosome proteins and complexes"/>
</dbReference>
<dbReference type="Reactome" id="R-HSA-380284">
    <property type="pathway name" value="Loss of proteins required for interphase microtubule organization from the centrosome"/>
</dbReference>
<dbReference type="Reactome" id="R-HSA-380320">
    <property type="pathway name" value="Recruitment of NuMA to mitotic centrosomes"/>
</dbReference>
<dbReference type="Reactome" id="R-HSA-5620912">
    <property type="pathway name" value="Anchoring of the basal body to the plasma membrane"/>
</dbReference>
<dbReference type="Reactome" id="R-HSA-6804115">
    <property type="pathway name" value="TP53 regulates transcription of additional cell cycle genes whose exact role in the p53 pathway remain uncertain"/>
</dbReference>
<dbReference type="Reactome" id="R-HSA-8854518">
    <property type="pathway name" value="AURKA Activation by TPX2"/>
</dbReference>
<dbReference type="SignaLink" id="Q9HC77"/>
<dbReference type="SIGNOR" id="Q9HC77"/>
<dbReference type="BioGRID-ORCS" id="55835">
    <property type="hits" value="125 hits in 1161 CRISPR screens"/>
</dbReference>
<dbReference type="CD-CODE" id="8C2F96ED">
    <property type="entry name" value="Centrosome"/>
</dbReference>
<dbReference type="ChiTaRS" id="CENPJ">
    <property type="organism name" value="human"/>
</dbReference>
<dbReference type="GeneWiki" id="CENPJ"/>
<dbReference type="GenomeRNAi" id="55835"/>
<dbReference type="Pharos" id="Q9HC77">
    <property type="development level" value="Tbio"/>
</dbReference>
<dbReference type="PRO" id="PR:Q9HC77"/>
<dbReference type="Proteomes" id="UP000005640">
    <property type="component" value="Chromosome 13"/>
</dbReference>
<dbReference type="RNAct" id="Q9HC77">
    <property type="molecule type" value="protein"/>
</dbReference>
<dbReference type="Bgee" id="ENSG00000151849">
    <property type="expression patterns" value="Expressed in sperm and 163 other cell types or tissues"/>
</dbReference>
<dbReference type="ExpressionAtlas" id="Q9HC77">
    <property type="expression patterns" value="baseline and differential"/>
</dbReference>
<dbReference type="GO" id="GO:0005814">
    <property type="term" value="C:centriole"/>
    <property type="evidence" value="ECO:0000314"/>
    <property type="project" value="UniProtKB"/>
</dbReference>
<dbReference type="GO" id="GO:0005813">
    <property type="term" value="C:centrosome"/>
    <property type="evidence" value="ECO:0000314"/>
    <property type="project" value="HPA"/>
</dbReference>
<dbReference type="GO" id="GO:0036064">
    <property type="term" value="C:ciliary basal body"/>
    <property type="evidence" value="ECO:0007669"/>
    <property type="project" value="Ensembl"/>
</dbReference>
<dbReference type="GO" id="GO:0005737">
    <property type="term" value="C:cytoplasm"/>
    <property type="evidence" value="ECO:0000314"/>
    <property type="project" value="MGI"/>
</dbReference>
<dbReference type="GO" id="GO:0005829">
    <property type="term" value="C:cytosol"/>
    <property type="evidence" value="ECO:0000304"/>
    <property type="project" value="Reactome"/>
</dbReference>
<dbReference type="GO" id="GO:0008275">
    <property type="term" value="C:gamma-tubulin small complex"/>
    <property type="evidence" value="ECO:0000303"/>
    <property type="project" value="UniProtKB"/>
</dbReference>
<dbReference type="GO" id="GO:0005874">
    <property type="term" value="C:microtubule"/>
    <property type="evidence" value="ECO:0007669"/>
    <property type="project" value="UniProtKB-KW"/>
</dbReference>
<dbReference type="GO" id="GO:0120099">
    <property type="term" value="C:procentriole replication complex"/>
    <property type="evidence" value="ECO:0000353"/>
    <property type="project" value="ComplexPortal"/>
</dbReference>
<dbReference type="GO" id="GO:0043015">
    <property type="term" value="F:gamma-tubulin binding"/>
    <property type="evidence" value="ECO:0000314"/>
    <property type="project" value="MGI"/>
</dbReference>
<dbReference type="GO" id="GO:0042802">
    <property type="term" value="F:identical protein binding"/>
    <property type="evidence" value="ECO:0000353"/>
    <property type="project" value="IntAct"/>
</dbReference>
<dbReference type="GO" id="GO:0019904">
    <property type="term" value="F:protein domain specific binding"/>
    <property type="evidence" value="ECO:0000353"/>
    <property type="project" value="UniProtKB"/>
</dbReference>
<dbReference type="GO" id="GO:0019901">
    <property type="term" value="F:protein kinase binding"/>
    <property type="evidence" value="ECO:0000353"/>
    <property type="project" value="UniProtKB"/>
</dbReference>
<dbReference type="GO" id="GO:0003713">
    <property type="term" value="F:transcription coactivator activity"/>
    <property type="evidence" value="ECO:0000314"/>
    <property type="project" value="MGI"/>
</dbReference>
<dbReference type="GO" id="GO:0015631">
    <property type="term" value="F:tubulin binding"/>
    <property type="evidence" value="ECO:0000314"/>
    <property type="project" value="UniProtKB"/>
</dbReference>
<dbReference type="GO" id="GO:0030954">
    <property type="term" value="P:astral microtubule nucleation"/>
    <property type="evidence" value="ECO:0000314"/>
    <property type="project" value="MGI"/>
</dbReference>
<dbReference type="GO" id="GO:0051301">
    <property type="term" value="P:cell division"/>
    <property type="evidence" value="ECO:0000303"/>
    <property type="project" value="UniProtKB"/>
</dbReference>
<dbReference type="GO" id="GO:0061511">
    <property type="term" value="P:centriole elongation"/>
    <property type="evidence" value="ECO:0000314"/>
    <property type="project" value="UniProtKB"/>
</dbReference>
<dbReference type="GO" id="GO:0007099">
    <property type="term" value="P:centriole replication"/>
    <property type="evidence" value="ECO:0000315"/>
    <property type="project" value="UniProtKB"/>
</dbReference>
<dbReference type="GO" id="GO:0060271">
    <property type="term" value="P:cilium assembly"/>
    <property type="evidence" value="ECO:0000318"/>
    <property type="project" value="GO_Central"/>
</dbReference>
<dbReference type="GO" id="GO:0007020">
    <property type="term" value="P:microtubule nucleation"/>
    <property type="evidence" value="ECO:0000304"/>
    <property type="project" value="UniProtKB"/>
</dbReference>
<dbReference type="GO" id="GO:0046785">
    <property type="term" value="P:microtubule polymerization"/>
    <property type="evidence" value="ECO:0000315"/>
    <property type="project" value="UniProtKB"/>
</dbReference>
<dbReference type="GO" id="GO:0044458">
    <property type="term" value="P:motile cilium assembly"/>
    <property type="evidence" value="ECO:0007669"/>
    <property type="project" value="Ensembl"/>
</dbReference>
<dbReference type="GO" id="GO:1905515">
    <property type="term" value="P:non-motile cilium assembly"/>
    <property type="evidence" value="ECO:0007669"/>
    <property type="project" value="Ensembl"/>
</dbReference>
<dbReference type="GO" id="GO:1903724">
    <property type="term" value="P:positive regulation of centriole elongation"/>
    <property type="evidence" value="ECO:0000315"/>
    <property type="project" value="UniProtKB"/>
</dbReference>
<dbReference type="GO" id="GO:0046601">
    <property type="term" value="P:positive regulation of centriole replication"/>
    <property type="evidence" value="ECO:0000314"/>
    <property type="project" value="ComplexPortal"/>
</dbReference>
<dbReference type="GO" id="GO:1904951">
    <property type="term" value="P:positive regulation of establishment of protein localization"/>
    <property type="evidence" value="ECO:0000315"/>
    <property type="project" value="UniProtKB"/>
</dbReference>
<dbReference type="GO" id="GO:1900087">
    <property type="term" value="P:positive regulation of G1/S transition of mitotic cell cycle"/>
    <property type="evidence" value="ECO:0000314"/>
    <property type="project" value="ComplexPortal"/>
</dbReference>
<dbReference type="GO" id="GO:1902857">
    <property type="term" value="P:positive regulation of non-motile cilium assembly"/>
    <property type="evidence" value="ECO:0007669"/>
    <property type="project" value="Ensembl"/>
</dbReference>
<dbReference type="GO" id="GO:0046427">
    <property type="term" value="P:positive regulation of receptor signaling pathway via JAK-STAT"/>
    <property type="evidence" value="ECO:0000314"/>
    <property type="project" value="MGI"/>
</dbReference>
<dbReference type="GO" id="GO:1905832">
    <property type="term" value="P:positive regulation of spindle assembly"/>
    <property type="evidence" value="ECO:0000303"/>
    <property type="project" value="ComplexPortal"/>
</dbReference>
<dbReference type="GO" id="GO:0046599">
    <property type="term" value="P:regulation of centriole replication"/>
    <property type="evidence" value="ECO:0000315"/>
    <property type="project" value="UniProtKB"/>
</dbReference>
<dbReference type="GO" id="GO:0060236">
    <property type="term" value="P:regulation of mitotic spindle organization"/>
    <property type="evidence" value="ECO:0000303"/>
    <property type="project" value="ComplexPortal"/>
</dbReference>
<dbReference type="GO" id="GO:0007224">
    <property type="term" value="P:smoothened signaling pathway"/>
    <property type="evidence" value="ECO:0007669"/>
    <property type="project" value="Ensembl"/>
</dbReference>
<dbReference type="FunFam" id="2.60.450.20:FF:000001">
    <property type="entry name" value="Centromere protein J"/>
    <property type="match status" value="1"/>
</dbReference>
<dbReference type="Gene3D" id="2.60.450.20">
    <property type="match status" value="1"/>
</dbReference>
<dbReference type="InterPro" id="IPR009852">
    <property type="entry name" value="CENPJ_C_dom"/>
</dbReference>
<dbReference type="InterPro" id="IPR047002">
    <property type="entry name" value="Tcp10_C_sf"/>
</dbReference>
<dbReference type="InterPro" id="IPR026581">
    <property type="entry name" value="TCP10L/CENPJ"/>
</dbReference>
<dbReference type="PANTHER" id="PTHR10331:SF23">
    <property type="entry name" value="CENTROMERE PROTEIN J"/>
    <property type="match status" value="1"/>
</dbReference>
<dbReference type="PANTHER" id="PTHR10331">
    <property type="entry name" value="T COMPLEX PROTEIN 10"/>
    <property type="match status" value="1"/>
</dbReference>
<dbReference type="Pfam" id="PF07202">
    <property type="entry name" value="Tcp10_C"/>
    <property type="match status" value="4"/>
</dbReference>
<name>CPAP_HUMAN</name>